<protein>
    <recommendedName>
        <fullName>GDP-mannose transporter</fullName>
        <shortName>GMT</shortName>
    </recommendedName>
</protein>
<evidence type="ECO:0000250" key="1"/>
<evidence type="ECO:0000255" key="2"/>
<evidence type="ECO:0000256" key="3">
    <source>
        <dbReference type="SAM" id="MobiDB-lite"/>
    </source>
</evidence>
<evidence type="ECO:0000305" key="4"/>
<keyword id="KW-0968">Cytoplasmic vesicle</keyword>
<keyword id="KW-0256">Endoplasmic reticulum</keyword>
<keyword id="KW-0325">Glycoprotein</keyword>
<keyword id="KW-0333">Golgi apparatus</keyword>
<keyword id="KW-0472">Membrane</keyword>
<keyword id="KW-1185">Reference proteome</keyword>
<keyword id="KW-0762">Sugar transport</keyword>
<keyword id="KW-0812">Transmembrane</keyword>
<keyword id="KW-1133">Transmembrane helix</keyword>
<keyword id="KW-0813">Transport</keyword>
<name>GMT_MALGO</name>
<gene>
    <name type="primary">VRG4</name>
    <name type="ORF">MGL_0485</name>
</gene>
<accession>A8PTV6</accession>
<comment type="function">
    <text evidence="1">Involved in the import of GDP-mannose from the cytoplasm into the Golgi lumen.</text>
</comment>
<comment type="subunit">
    <text evidence="1">Homooligomer.</text>
</comment>
<comment type="subcellular location">
    <subcellularLocation>
        <location evidence="1">Golgi apparatus membrane</location>
        <topology evidence="1">Multi-pass membrane protein</topology>
    </subcellularLocation>
    <subcellularLocation>
        <location evidence="1">Cytoplasmic vesicle membrane</location>
        <topology evidence="1">Multi-pass membrane protein</topology>
    </subcellularLocation>
    <subcellularLocation>
        <location evidence="1">Endoplasmic reticulum membrane</location>
        <topology evidence="1">Multi-pass membrane protein</topology>
    </subcellularLocation>
</comment>
<comment type="similarity">
    <text evidence="4">Belongs to the TPT transporter family. SLC35D subfamily.</text>
</comment>
<reference key="1">
    <citation type="journal article" date="2007" name="Proc. Natl. Acad. Sci. U.S.A.">
        <title>Dandruff-associated Malassezia genomes reveal convergent and divergent virulence traits shared with plant and human fungal pathogens.</title>
        <authorList>
            <person name="Xu J."/>
            <person name="Saunders C.W."/>
            <person name="Hu P."/>
            <person name="Grant R.A."/>
            <person name="Boekhout T."/>
            <person name="Kuramae E.E."/>
            <person name="Kronstad J.W."/>
            <person name="DeAngelis Y.M."/>
            <person name="Reeder N.L."/>
            <person name="Johnstone K.R."/>
            <person name="Leland M."/>
            <person name="Fieno A.M."/>
            <person name="Begley W.M."/>
            <person name="Sun Y."/>
            <person name="Lacey M.P."/>
            <person name="Chaudhary T."/>
            <person name="Keough T."/>
            <person name="Chu L."/>
            <person name="Sears R."/>
            <person name="Yuan B."/>
            <person name="Dawson T.L. Jr."/>
        </authorList>
    </citation>
    <scope>NUCLEOTIDE SEQUENCE [LARGE SCALE GENOMIC DNA]</scope>
    <source>
        <strain>ATCC MYA-4612 / CBS 7966</strain>
    </source>
</reference>
<sequence>MSMTTSRERNVPPDDNEIELGRSRHSDVAPESESPQAHLLNSDVASVTKNFMRNASHATANSGAIAAVLSYCIASISMTVINKFTVSGEKFTMNLLVLLCQCSVGVAMVYAAKCMGWIQIRTLNMRDVKTWFPISTMLVFVIYTGSKALQHMDIPIYTIFKNLTIILIAYGELLWFNGRITPMVFLSFILMVLSSIIAAWPDLAPSTAKTLYSRAFESLNLYTGVPHATEGWGEGVRTEAASAMHPHTALSPLSVKPYVGAATPLAAAVAQQNSEAAASSSTLSSWSTNGYVWMLANCMISATYVLVMRKRIKLTGFKDWDTMFYNNLLSIPVLLFMSLLVENWSVETFEHNFPREKRSTLVFAILLSGTGGVFISYTTAWCIRVTSSTTYSMVGALNKLPLALSGMLFFGNPVTPYNSIGVAVGFIAGIVYAVGKYKQVVAARIANSDATGASTSLSSSSSAAPSGEYVFDLKGEIPTHTRQQ</sequence>
<dbReference type="EMBL" id="AAYY01000001">
    <property type="protein sequence ID" value="EDP45496.1"/>
    <property type="molecule type" value="Genomic_DNA"/>
</dbReference>
<dbReference type="RefSeq" id="XP_001732710.1">
    <property type="nucleotide sequence ID" value="XM_001732658.1"/>
</dbReference>
<dbReference type="SMR" id="A8PTV6"/>
<dbReference type="FunCoup" id="A8PTV6">
    <property type="interactions" value="154"/>
</dbReference>
<dbReference type="STRING" id="425265.A8PTV6"/>
<dbReference type="GlyCosmos" id="A8PTV6">
    <property type="glycosylation" value="1 site, No reported glycans"/>
</dbReference>
<dbReference type="GeneID" id="5857016"/>
<dbReference type="KEGG" id="mgl:MGL_0485"/>
<dbReference type="VEuPathDB" id="FungiDB:MGL_0485"/>
<dbReference type="InParanoid" id="A8PTV6"/>
<dbReference type="OMA" id="KLIRVWI"/>
<dbReference type="OrthoDB" id="417037at2759"/>
<dbReference type="Proteomes" id="UP000008837">
    <property type="component" value="Unassembled WGS sequence"/>
</dbReference>
<dbReference type="GO" id="GO:0030659">
    <property type="term" value="C:cytoplasmic vesicle membrane"/>
    <property type="evidence" value="ECO:0007669"/>
    <property type="project" value="UniProtKB-SubCell"/>
</dbReference>
<dbReference type="GO" id="GO:0005789">
    <property type="term" value="C:endoplasmic reticulum membrane"/>
    <property type="evidence" value="ECO:0007669"/>
    <property type="project" value="UniProtKB-SubCell"/>
</dbReference>
<dbReference type="GO" id="GO:0000139">
    <property type="term" value="C:Golgi membrane"/>
    <property type="evidence" value="ECO:0007669"/>
    <property type="project" value="UniProtKB-SubCell"/>
</dbReference>
<dbReference type="InterPro" id="IPR000620">
    <property type="entry name" value="EamA_dom"/>
</dbReference>
<dbReference type="InterPro" id="IPR050186">
    <property type="entry name" value="TPT_transporter"/>
</dbReference>
<dbReference type="NCBIfam" id="TIGR00803">
    <property type="entry name" value="nst"/>
    <property type="match status" value="1"/>
</dbReference>
<dbReference type="PANTHER" id="PTHR11132">
    <property type="entry name" value="SOLUTE CARRIER FAMILY 35"/>
    <property type="match status" value="1"/>
</dbReference>
<dbReference type="Pfam" id="PF00892">
    <property type="entry name" value="EamA"/>
    <property type="match status" value="1"/>
</dbReference>
<dbReference type="SUPFAM" id="SSF103481">
    <property type="entry name" value="Multidrug resistance efflux transporter EmrE"/>
    <property type="match status" value="1"/>
</dbReference>
<organism>
    <name type="scientific">Malassezia globosa (strain ATCC MYA-4612 / CBS 7966)</name>
    <name type="common">Dandruff-associated fungus</name>
    <dbReference type="NCBI Taxonomy" id="425265"/>
    <lineage>
        <taxon>Eukaryota</taxon>
        <taxon>Fungi</taxon>
        <taxon>Dikarya</taxon>
        <taxon>Basidiomycota</taxon>
        <taxon>Ustilaginomycotina</taxon>
        <taxon>Malasseziomycetes</taxon>
        <taxon>Malasseziales</taxon>
        <taxon>Malasseziaceae</taxon>
        <taxon>Malassezia</taxon>
    </lineage>
</organism>
<feature type="chain" id="PRO_0000333528" description="GDP-mannose transporter">
    <location>
        <begin position="1"/>
        <end position="484"/>
    </location>
</feature>
<feature type="topological domain" description="Cytoplasmic" evidence="1">
    <location>
        <begin position="1"/>
        <end position="60"/>
    </location>
</feature>
<feature type="transmembrane region" description="Helical" evidence="2">
    <location>
        <begin position="61"/>
        <end position="81"/>
    </location>
</feature>
<feature type="topological domain" description="Lumenal" evidence="1">
    <location>
        <begin position="82"/>
        <end position="90"/>
    </location>
</feature>
<feature type="transmembrane region" description="Helical" evidence="2">
    <location>
        <begin position="91"/>
        <end position="111"/>
    </location>
</feature>
<feature type="topological domain" description="Cytoplasmic" evidence="1">
    <location>
        <begin position="112"/>
        <end position="129"/>
    </location>
</feature>
<feature type="transmembrane region" description="Helical" evidence="2">
    <location>
        <begin position="130"/>
        <end position="150"/>
    </location>
</feature>
<feature type="topological domain" description="Lumenal" evidence="1">
    <location>
        <begin position="151"/>
        <end position="155"/>
    </location>
</feature>
<feature type="transmembrane region" description="Helical" evidence="2">
    <location>
        <begin position="156"/>
        <end position="176"/>
    </location>
</feature>
<feature type="topological domain" description="Cytoplasmic" evidence="1">
    <location>
        <begin position="177"/>
        <end position="179"/>
    </location>
</feature>
<feature type="transmembrane region" description="Helical" evidence="2">
    <location>
        <begin position="180"/>
        <end position="200"/>
    </location>
</feature>
<feature type="topological domain" description="Lumenal" evidence="1">
    <location>
        <begin position="201"/>
        <end position="287"/>
    </location>
</feature>
<feature type="transmembrane region" description="Helical" evidence="2">
    <location>
        <begin position="288"/>
        <end position="308"/>
    </location>
</feature>
<feature type="topological domain" description="Cytoplasmic" evidence="1">
    <location>
        <begin position="309"/>
        <end position="321"/>
    </location>
</feature>
<feature type="transmembrane region" description="Helical" evidence="2">
    <location>
        <begin position="322"/>
        <end position="342"/>
    </location>
</feature>
<feature type="topological domain" description="Lumenal" evidence="1">
    <location>
        <begin position="343"/>
        <end position="360"/>
    </location>
</feature>
<feature type="transmembrane region" description="Helical" evidence="2">
    <location>
        <begin position="361"/>
        <end position="381"/>
    </location>
</feature>
<feature type="topological domain" description="Cytoplasmic" evidence="1">
    <location>
        <begin position="382"/>
        <end position="390"/>
    </location>
</feature>
<feature type="transmembrane region" description="Helical" evidence="2">
    <location>
        <begin position="391"/>
        <end position="411"/>
    </location>
</feature>
<feature type="topological domain" description="Lumenal" evidence="1">
    <location>
        <begin position="412"/>
        <end position="413"/>
    </location>
</feature>
<feature type="transmembrane region" description="Helical" evidence="2">
    <location>
        <begin position="414"/>
        <end position="434"/>
    </location>
</feature>
<feature type="topological domain" description="Cytoplasmic" evidence="1">
    <location>
        <begin position="435"/>
        <end position="484"/>
    </location>
</feature>
<feature type="region of interest" description="Disordered" evidence="3">
    <location>
        <begin position="1"/>
        <end position="34"/>
    </location>
</feature>
<feature type="compositionally biased region" description="Basic and acidic residues" evidence="3">
    <location>
        <begin position="1"/>
        <end position="12"/>
    </location>
</feature>
<feature type="compositionally biased region" description="Basic and acidic residues" evidence="3">
    <location>
        <begin position="19"/>
        <end position="28"/>
    </location>
</feature>
<feature type="glycosylation site" description="N-linked (GlcNAc...) asparagine" evidence="2">
    <location>
        <position position="343"/>
    </location>
</feature>
<proteinExistence type="inferred from homology"/>